<keyword id="KW-0031">Aminopeptidase</keyword>
<keyword id="KW-0963">Cytoplasm</keyword>
<keyword id="KW-0378">Hydrolase</keyword>
<keyword id="KW-0479">Metal-binding</keyword>
<keyword id="KW-0482">Metalloprotease</keyword>
<keyword id="KW-0645">Protease</keyword>
<keyword id="KW-0862">Zinc</keyword>
<comment type="function">
    <text evidence="1">Cleaves the N-terminal amino acid of tripeptides.</text>
</comment>
<comment type="catalytic activity">
    <reaction evidence="1">
        <text>Release of the N-terminal residue from a tripeptide.</text>
        <dbReference type="EC" id="3.4.11.4"/>
    </reaction>
</comment>
<comment type="cofactor">
    <cofactor evidence="1">
        <name>Zn(2+)</name>
        <dbReference type="ChEBI" id="CHEBI:29105"/>
    </cofactor>
    <text evidence="1">Binds 2 Zn(2+) ions per subunit.</text>
</comment>
<comment type="subcellular location">
    <subcellularLocation>
        <location evidence="1">Cytoplasm</location>
    </subcellularLocation>
</comment>
<comment type="similarity">
    <text evidence="1">Belongs to the peptidase M20B family.</text>
</comment>
<evidence type="ECO:0000255" key="1">
    <source>
        <dbReference type="HAMAP-Rule" id="MF_00550"/>
    </source>
</evidence>
<gene>
    <name evidence="1" type="primary">pepT</name>
    <name type="ordered locus">SA0698</name>
</gene>
<accession>P65806</accession>
<accession>Q99VN1</accession>
<proteinExistence type="inferred from homology"/>
<protein>
    <recommendedName>
        <fullName evidence="1">Peptidase T</fullName>
        <ecNumber evidence="1">3.4.11.4</ecNumber>
    </recommendedName>
    <alternativeName>
        <fullName evidence="1">Aminotripeptidase</fullName>
        <shortName evidence="1">Tripeptidase</shortName>
    </alternativeName>
    <alternativeName>
        <fullName evidence="1">Tripeptide aminopeptidase</fullName>
    </alternativeName>
</protein>
<dbReference type="EC" id="3.4.11.4" evidence="1"/>
<dbReference type="EMBL" id="BA000018">
    <property type="protein sequence ID" value="BAB41931.1"/>
    <property type="molecule type" value="Genomic_DNA"/>
</dbReference>
<dbReference type="PIR" id="H89846">
    <property type="entry name" value="H89846"/>
</dbReference>
<dbReference type="RefSeq" id="WP_000795811.1">
    <property type="nucleotide sequence ID" value="NC_002745.2"/>
</dbReference>
<dbReference type="SMR" id="P65806"/>
<dbReference type="MEROPS" id="M20.003"/>
<dbReference type="EnsemblBacteria" id="BAB41931">
    <property type="protein sequence ID" value="BAB41931"/>
    <property type="gene ID" value="BAB41931"/>
</dbReference>
<dbReference type="KEGG" id="sau:SA0698"/>
<dbReference type="HOGENOM" id="CLU_053676_0_0_9"/>
<dbReference type="GO" id="GO:0005829">
    <property type="term" value="C:cytosol"/>
    <property type="evidence" value="ECO:0007669"/>
    <property type="project" value="TreeGrafter"/>
</dbReference>
<dbReference type="GO" id="GO:0008237">
    <property type="term" value="F:metallopeptidase activity"/>
    <property type="evidence" value="ECO:0007669"/>
    <property type="project" value="UniProtKB-KW"/>
</dbReference>
<dbReference type="GO" id="GO:0045148">
    <property type="term" value="F:tripeptide aminopeptidase activity"/>
    <property type="evidence" value="ECO:0007669"/>
    <property type="project" value="UniProtKB-UniRule"/>
</dbReference>
<dbReference type="GO" id="GO:0008270">
    <property type="term" value="F:zinc ion binding"/>
    <property type="evidence" value="ECO:0007669"/>
    <property type="project" value="UniProtKB-UniRule"/>
</dbReference>
<dbReference type="GO" id="GO:0043171">
    <property type="term" value="P:peptide catabolic process"/>
    <property type="evidence" value="ECO:0007669"/>
    <property type="project" value="UniProtKB-UniRule"/>
</dbReference>
<dbReference type="GO" id="GO:0006508">
    <property type="term" value="P:proteolysis"/>
    <property type="evidence" value="ECO:0007669"/>
    <property type="project" value="UniProtKB-UniRule"/>
</dbReference>
<dbReference type="CDD" id="cd03892">
    <property type="entry name" value="M20_peptT"/>
    <property type="match status" value="1"/>
</dbReference>
<dbReference type="FunFam" id="3.30.70.360:FF:000002">
    <property type="entry name" value="Peptidase T"/>
    <property type="match status" value="1"/>
</dbReference>
<dbReference type="Gene3D" id="3.30.70.360">
    <property type="match status" value="1"/>
</dbReference>
<dbReference type="Gene3D" id="3.40.630.10">
    <property type="entry name" value="Zn peptidases"/>
    <property type="match status" value="1"/>
</dbReference>
<dbReference type="HAMAP" id="MF_00550">
    <property type="entry name" value="Aminopeptidase_M20"/>
    <property type="match status" value="1"/>
</dbReference>
<dbReference type="InterPro" id="IPR001261">
    <property type="entry name" value="ArgE/DapE_CS"/>
</dbReference>
<dbReference type="InterPro" id="IPR036264">
    <property type="entry name" value="Bact_exopeptidase_dim_dom"/>
</dbReference>
<dbReference type="InterPro" id="IPR002933">
    <property type="entry name" value="Peptidase_M20"/>
</dbReference>
<dbReference type="InterPro" id="IPR011650">
    <property type="entry name" value="Peptidase_M20_dimer"/>
</dbReference>
<dbReference type="InterPro" id="IPR010161">
    <property type="entry name" value="Peptidase_M20B"/>
</dbReference>
<dbReference type="NCBIfam" id="TIGR01882">
    <property type="entry name" value="peptidase-T"/>
    <property type="match status" value="1"/>
</dbReference>
<dbReference type="NCBIfam" id="NF003976">
    <property type="entry name" value="PRK05469.1"/>
    <property type="match status" value="1"/>
</dbReference>
<dbReference type="NCBIfam" id="NF009920">
    <property type="entry name" value="PRK13381.1"/>
    <property type="match status" value="1"/>
</dbReference>
<dbReference type="PANTHER" id="PTHR42994">
    <property type="entry name" value="PEPTIDASE T"/>
    <property type="match status" value="1"/>
</dbReference>
<dbReference type="PANTHER" id="PTHR42994:SF1">
    <property type="entry name" value="PEPTIDASE T"/>
    <property type="match status" value="1"/>
</dbReference>
<dbReference type="Pfam" id="PF07687">
    <property type="entry name" value="M20_dimer"/>
    <property type="match status" value="1"/>
</dbReference>
<dbReference type="Pfam" id="PF01546">
    <property type="entry name" value="Peptidase_M20"/>
    <property type="match status" value="1"/>
</dbReference>
<dbReference type="PIRSF" id="PIRSF037215">
    <property type="entry name" value="Peptidase_M20B"/>
    <property type="match status" value="1"/>
</dbReference>
<dbReference type="SUPFAM" id="SSF55031">
    <property type="entry name" value="Bacterial exopeptidase dimerisation domain"/>
    <property type="match status" value="1"/>
</dbReference>
<dbReference type="SUPFAM" id="SSF53187">
    <property type="entry name" value="Zn-dependent exopeptidases"/>
    <property type="match status" value="1"/>
</dbReference>
<dbReference type="PROSITE" id="PS00758">
    <property type="entry name" value="ARGE_DAPE_CPG2_1"/>
    <property type="match status" value="1"/>
</dbReference>
<dbReference type="PROSITE" id="PS00759">
    <property type="entry name" value="ARGE_DAPE_CPG2_2"/>
    <property type="match status" value="1"/>
</dbReference>
<name>PEPT_STAAN</name>
<reference key="1">
    <citation type="journal article" date="2001" name="Lancet">
        <title>Whole genome sequencing of meticillin-resistant Staphylococcus aureus.</title>
        <authorList>
            <person name="Kuroda M."/>
            <person name="Ohta T."/>
            <person name="Uchiyama I."/>
            <person name="Baba T."/>
            <person name="Yuzawa H."/>
            <person name="Kobayashi I."/>
            <person name="Cui L."/>
            <person name="Oguchi A."/>
            <person name="Aoki K."/>
            <person name="Nagai Y."/>
            <person name="Lian J.-Q."/>
            <person name="Ito T."/>
            <person name="Kanamori M."/>
            <person name="Matsumaru H."/>
            <person name="Maruyama A."/>
            <person name="Murakami H."/>
            <person name="Hosoyama A."/>
            <person name="Mizutani-Ui Y."/>
            <person name="Takahashi N.K."/>
            <person name="Sawano T."/>
            <person name="Inoue R."/>
            <person name="Kaito C."/>
            <person name="Sekimizu K."/>
            <person name="Hirakawa H."/>
            <person name="Kuhara S."/>
            <person name="Goto S."/>
            <person name="Yabuzaki J."/>
            <person name="Kanehisa M."/>
            <person name="Yamashita A."/>
            <person name="Oshima K."/>
            <person name="Furuya K."/>
            <person name="Yoshino C."/>
            <person name="Shiba T."/>
            <person name="Hattori M."/>
            <person name="Ogasawara N."/>
            <person name="Hayashi H."/>
            <person name="Hiramatsu K."/>
        </authorList>
    </citation>
    <scope>NUCLEOTIDE SEQUENCE [LARGE SCALE GENOMIC DNA]</scope>
    <source>
        <strain>N315</strain>
    </source>
</reference>
<sequence length="408" mass="45820">MKNQLIDRLTRYTTIDTQSDPKSTTTPSTEKQWDLLHLLEKELQQLGLPTDLDENGYLFATLESNIDADVPTVGFLAHVDTSPDFNASNVKPQIIENYDGKPYKLGNTKRVLDPKVFPELNSLVGHTLMVTDGTSLLGADDKAGIVEIMEAICYLQEHPEIKHGTIRIGFTPDEEIGRGPHKFDVDRFNADFAYTMDGSQYGELQYESFNAAEAVITCHGVNVHPGSAKNAMVNAIRLGEQFDSLLPDSEVPERTEGYEGFYHLMNFEGTVEKATLQYIIRDHDKKQFELRKKRILEIRDDINAHFENYPVKVDISDQYFNMAEKILPLPHIIDIPKRVFAKLDIPANTEPIRGGTDGSQLSFMGLPTPNIFTGCGNFHGPYEYASIDVMEKAVQVIIGIVEDIAENH</sequence>
<organism>
    <name type="scientific">Staphylococcus aureus (strain N315)</name>
    <dbReference type="NCBI Taxonomy" id="158879"/>
    <lineage>
        <taxon>Bacteria</taxon>
        <taxon>Bacillati</taxon>
        <taxon>Bacillota</taxon>
        <taxon>Bacilli</taxon>
        <taxon>Bacillales</taxon>
        <taxon>Staphylococcaceae</taxon>
        <taxon>Staphylococcus</taxon>
    </lineage>
</organism>
<feature type="chain" id="PRO_0000185318" description="Peptidase T">
    <location>
        <begin position="1"/>
        <end position="408"/>
    </location>
</feature>
<feature type="active site" evidence="1">
    <location>
        <position position="80"/>
    </location>
</feature>
<feature type="active site" description="Proton acceptor" evidence="1">
    <location>
        <position position="174"/>
    </location>
</feature>
<feature type="binding site" evidence="1">
    <location>
        <position position="78"/>
    </location>
    <ligand>
        <name>Zn(2+)</name>
        <dbReference type="ChEBI" id="CHEBI:29105"/>
        <label>1</label>
    </ligand>
</feature>
<feature type="binding site" evidence="1">
    <location>
        <position position="140"/>
    </location>
    <ligand>
        <name>Zn(2+)</name>
        <dbReference type="ChEBI" id="CHEBI:29105"/>
        <label>1</label>
    </ligand>
</feature>
<feature type="binding site" evidence="1">
    <location>
        <position position="140"/>
    </location>
    <ligand>
        <name>Zn(2+)</name>
        <dbReference type="ChEBI" id="CHEBI:29105"/>
        <label>2</label>
    </ligand>
</feature>
<feature type="binding site" evidence="1">
    <location>
        <position position="175"/>
    </location>
    <ligand>
        <name>Zn(2+)</name>
        <dbReference type="ChEBI" id="CHEBI:29105"/>
        <label>2</label>
    </ligand>
</feature>
<feature type="binding site" evidence="1">
    <location>
        <position position="197"/>
    </location>
    <ligand>
        <name>Zn(2+)</name>
        <dbReference type="ChEBI" id="CHEBI:29105"/>
        <label>1</label>
    </ligand>
</feature>
<feature type="binding site" evidence="1">
    <location>
        <position position="379"/>
    </location>
    <ligand>
        <name>Zn(2+)</name>
        <dbReference type="ChEBI" id="CHEBI:29105"/>
        <label>2</label>
    </ligand>
</feature>